<evidence type="ECO:0000255" key="1">
    <source>
        <dbReference type="HAMAP-Rule" id="MF_00116"/>
    </source>
</evidence>
<feature type="chain" id="PRO_0000231424" description="Deoxyuridine 5'-triphosphate nucleotidohydrolase">
    <location>
        <begin position="1"/>
        <end position="155"/>
    </location>
</feature>
<feature type="binding site" evidence="1">
    <location>
        <begin position="74"/>
        <end position="76"/>
    </location>
    <ligand>
        <name>substrate</name>
    </ligand>
</feature>
<feature type="binding site" evidence="1">
    <location>
        <position position="87"/>
    </location>
    <ligand>
        <name>substrate</name>
    </ligand>
</feature>
<feature type="binding site" evidence="1">
    <location>
        <begin position="91"/>
        <end position="93"/>
    </location>
    <ligand>
        <name>substrate</name>
    </ligand>
</feature>
<protein>
    <recommendedName>
        <fullName evidence="1">Deoxyuridine 5'-triphosphate nucleotidohydrolase</fullName>
        <shortName evidence="1">dUTPase</shortName>
        <ecNumber evidence="1">3.6.1.23</ecNumber>
    </recommendedName>
    <alternativeName>
        <fullName evidence="1">dUTP pyrophosphatase</fullName>
    </alternativeName>
</protein>
<accession>Q3J0B2</accession>
<gene>
    <name evidence="1" type="primary">dut</name>
    <name type="ordered locus">RHOS4_22040</name>
    <name type="ORF">RSP_0598</name>
</gene>
<dbReference type="EC" id="3.6.1.23" evidence="1"/>
<dbReference type="EMBL" id="CP000143">
    <property type="protein sequence ID" value="ABA79772.1"/>
    <property type="molecule type" value="Genomic_DNA"/>
</dbReference>
<dbReference type="RefSeq" id="WP_011338344.1">
    <property type="nucleotide sequence ID" value="NC_007493.2"/>
</dbReference>
<dbReference type="RefSeq" id="YP_353673.1">
    <property type="nucleotide sequence ID" value="NC_007493.2"/>
</dbReference>
<dbReference type="SMR" id="Q3J0B2"/>
<dbReference type="STRING" id="272943.RSP_0598"/>
<dbReference type="EnsemblBacteria" id="ABA79772">
    <property type="protein sequence ID" value="ABA79772"/>
    <property type="gene ID" value="RSP_0598"/>
</dbReference>
<dbReference type="GeneID" id="3718012"/>
<dbReference type="KEGG" id="rsp:RSP_0598"/>
<dbReference type="PATRIC" id="fig|272943.9.peg.2550"/>
<dbReference type="eggNOG" id="COG0756">
    <property type="taxonomic scope" value="Bacteria"/>
</dbReference>
<dbReference type="OrthoDB" id="9809956at2"/>
<dbReference type="PhylomeDB" id="Q3J0B2"/>
<dbReference type="UniPathway" id="UPA00610">
    <property type="reaction ID" value="UER00666"/>
</dbReference>
<dbReference type="Proteomes" id="UP000002703">
    <property type="component" value="Chromosome 1"/>
</dbReference>
<dbReference type="GO" id="GO:0004170">
    <property type="term" value="F:dUTP diphosphatase activity"/>
    <property type="evidence" value="ECO:0007669"/>
    <property type="project" value="UniProtKB-UniRule"/>
</dbReference>
<dbReference type="GO" id="GO:0000287">
    <property type="term" value="F:magnesium ion binding"/>
    <property type="evidence" value="ECO:0007669"/>
    <property type="project" value="UniProtKB-UniRule"/>
</dbReference>
<dbReference type="GO" id="GO:0006226">
    <property type="term" value="P:dUMP biosynthetic process"/>
    <property type="evidence" value="ECO:0007669"/>
    <property type="project" value="UniProtKB-UniRule"/>
</dbReference>
<dbReference type="GO" id="GO:0046081">
    <property type="term" value="P:dUTP catabolic process"/>
    <property type="evidence" value="ECO:0007669"/>
    <property type="project" value="InterPro"/>
</dbReference>
<dbReference type="CDD" id="cd07557">
    <property type="entry name" value="trimeric_dUTPase"/>
    <property type="match status" value="1"/>
</dbReference>
<dbReference type="Gene3D" id="2.70.40.10">
    <property type="match status" value="1"/>
</dbReference>
<dbReference type="HAMAP" id="MF_00116">
    <property type="entry name" value="dUTPase_bact"/>
    <property type="match status" value="1"/>
</dbReference>
<dbReference type="InterPro" id="IPR008181">
    <property type="entry name" value="dUTPase"/>
</dbReference>
<dbReference type="InterPro" id="IPR029054">
    <property type="entry name" value="dUTPase-like"/>
</dbReference>
<dbReference type="InterPro" id="IPR036157">
    <property type="entry name" value="dUTPase-like_sf"/>
</dbReference>
<dbReference type="InterPro" id="IPR033704">
    <property type="entry name" value="dUTPase_trimeric"/>
</dbReference>
<dbReference type="NCBIfam" id="TIGR00576">
    <property type="entry name" value="dut"/>
    <property type="match status" value="1"/>
</dbReference>
<dbReference type="NCBIfam" id="NF001862">
    <property type="entry name" value="PRK00601.1"/>
    <property type="match status" value="1"/>
</dbReference>
<dbReference type="PANTHER" id="PTHR11241">
    <property type="entry name" value="DEOXYURIDINE 5'-TRIPHOSPHATE NUCLEOTIDOHYDROLASE"/>
    <property type="match status" value="1"/>
</dbReference>
<dbReference type="PANTHER" id="PTHR11241:SF0">
    <property type="entry name" value="DEOXYURIDINE 5'-TRIPHOSPHATE NUCLEOTIDOHYDROLASE"/>
    <property type="match status" value="1"/>
</dbReference>
<dbReference type="Pfam" id="PF00692">
    <property type="entry name" value="dUTPase"/>
    <property type="match status" value="1"/>
</dbReference>
<dbReference type="SUPFAM" id="SSF51283">
    <property type="entry name" value="dUTPase-like"/>
    <property type="match status" value="1"/>
</dbReference>
<proteinExistence type="inferred from homology"/>
<sequence>MRPVVRVIREDWADTALPLPGYETAGAAGADLRANLPPESRAEGLVLAPLGRVLVPTGLRIEIPDGFEVQIRPRSGLALKHGISLPNSPGTIDSDYRGPLGVILVNLGDEPFRVAHGDRIAQMVVAPVVQARFELADGLGATARGAGGFGSTGTA</sequence>
<reference key="1">
    <citation type="submission" date="2005-09" db="EMBL/GenBank/DDBJ databases">
        <title>Complete sequence of chromosome 1 of Rhodobacter sphaeroides 2.4.1.</title>
        <authorList>
            <person name="Copeland A."/>
            <person name="Lucas S."/>
            <person name="Lapidus A."/>
            <person name="Barry K."/>
            <person name="Detter J.C."/>
            <person name="Glavina T."/>
            <person name="Hammon N."/>
            <person name="Israni S."/>
            <person name="Pitluck S."/>
            <person name="Richardson P."/>
            <person name="Mackenzie C."/>
            <person name="Choudhary M."/>
            <person name="Larimer F."/>
            <person name="Hauser L.J."/>
            <person name="Land M."/>
            <person name="Donohue T.J."/>
            <person name="Kaplan S."/>
        </authorList>
    </citation>
    <scope>NUCLEOTIDE SEQUENCE [LARGE SCALE GENOMIC DNA]</scope>
    <source>
        <strain>ATCC 17023 / DSM 158 / JCM 6121 / CCUG 31486 / LMG 2827 / NBRC 12203 / NCIMB 8253 / ATH 2.4.1.</strain>
    </source>
</reference>
<name>DUT_CERS4</name>
<comment type="function">
    <text evidence="1">This enzyme is involved in nucleotide metabolism: it produces dUMP, the immediate precursor of thymidine nucleotides and it decreases the intracellular concentration of dUTP so that uracil cannot be incorporated into DNA.</text>
</comment>
<comment type="catalytic activity">
    <reaction evidence="1">
        <text>dUTP + H2O = dUMP + diphosphate + H(+)</text>
        <dbReference type="Rhea" id="RHEA:10248"/>
        <dbReference type="ChEBI" id="CHEBI:15377"/>
        <dbReference type="ChEBI" id="CHEBI:15378"/>
        <dbReference type="ChEBI" id="CHEBI:33019"/>
        <dbReference type="ChEBI" id="CHEBI:61555"/>
        <dbReference type="ChEBI" id="CHEBI:246422"/>
        <dbReference type="EC" id="3.6.1.23"/>
    </reaction>
</comment>
<comment type="cofactor">
    <cofactor evidence="1">
        <name>Mg(2+)</name>
        <dbReference type="ChEBI" id="CHEBI:18420"/>
    </cofactor>
</comment>
<comment type="pathway">
    <text evidence="1">Pyrimidine metabolism; dUMP biosynthesis; dUMP from dCTP (dUTP route): step 2/2.</text>
</comment>
<comment type="similarity">
    <text evidence="1">Belongs to the dUTPase family.</text>
</comment>
<keyword id="KW-0378">Hydrolase</keyword>
<keyword id="KW-0460">Magnesium</keyword>
<keyword id="KW-0479">Metal-binding</keyword>
<keyword id="KW-0546">Nucleotide metabolism</keyword>
<keyword id="KW-1185">Reference proteome</keyword>
<organism>
    <name type="scientific">Cereibacter sphaeroides (strain ATCC 17023 / DSM 158 / JCM 6121 / CCUG 31486 / LMG 2827 / NBRC 12203 / NCIMB 8253 / ATH 2.4.1.)</name>
    <name type="common">Rhodobacter sphaeroides</name>
    <dbReference type="NCBI Taxonomy" id="272943"/>
    <lineage>
        <taxon>Bacteria</taxon>
        <taxon>Pseudomonadati</taxon>
        <taxon>Pseudomonadota</taxon>
        <taxon>Alphaproteobacteria</taxon>
        <taxon>Rhodobacterales</taxon>
        <taxon>Paracoccaceae</taxon>
        <taxon>Cereibacter</taxon>
    </lineage>
</organism>